<gene>
    <name evidence="1" type="primary">rraA</name>
    <name type="ordered locus">ECED1_4631</name>
</gene>
<accession>B7MR18</accession>
<organism>
    <name type="scientific">Escherichia coli O81 (strain ED1a)</name>
    <dbReference type="NCBI Taxonomy" id="585397"/>
    <lineage>
        <taxon>Bacteria</taxon>
        <taxon>Pseudomonadati</taxon>
        <taxon>Pseudomonadota</taxon>
        <taxon>Gammaproteobacteria</taxon>
        <taxon>Enterobacterales</taxon>
        <taxon>Enterobacteriaceae</taxon>
        <taxon>Escherichia</taxon>
    </lineage>
</organism>
<proteinExistence type="inferred from homology"/>
<name>RRAA_ECO81</name>
<keyword id="KW-0963">Cytoplasm</keyword>
<sequence length="161" mass="17360">MKYDTSELCDIYQEDVNVVEPLFSNFGGRASFGGQIITVKCFEDNGLLYDLLEQNGRGRVLVVDGGGSVRRALVDAELARLAVQNEWEGLVIYGAVRQVDDLEELDIGIQAMAAIPVGAAGEGIGESDVRVNFGGVTFFSGDHLYADNTGIILSEDPLDIE</sequence>
<comment type="function">
    <text evidence="1">Globally modulates RNA abundance by binding to RNase E (Rne) and regulating its endonucleolytic activity. Can modulate Rne action in a substrate-dependent manner by altering the composition of the degradosome. Modulates RNA-binding and helicase activities of the degradosome.</text>
</comment>
<comment type="subunit">
    <text evidence="1">Homotrimer. Binds to both RNA-binding sites in the C-terminal region of Rne and to RhlB.</text>
</comment>
<comment type="subcellular location">
    <subcellularLocation>
        <location evidence="1">Cytoplasm</location>
    </subcellularLocation>
</comment>
<comment type="similarity">
    <text evidence="1">Belongs to the RraA family.</text>
</comment>
<evidence type="ECO:0000255" key="1">
    <source>
        <dbReference type="HAMAP-Rule" id="MF_00471"/>
    </source>
</evidence>
<dbReference type="EMBL" id="CU928162">
    <property type="protein sequence ID" value="CAR10601.1"/>
    <property type="molecule type" value="Genomic_DNA"/>
</dbReference>
<dbReference type="RefSeq" id="WP_000872908.1">
    <property type="nucleotide sequence ID" value="NC_011745.1"/>
</dbReference>
<dbReference type="SMR" id="B7MR18"/>
<dbReference type="GeneID" id="93777969"/>
<dbReference type="KEGG" id="ecq:ECED1_4631"/>
<dbReference type="HOGENOM" id="CLU_072626_4_0_6"/>
<dbReference type="Proteomes" id="UP000000748">
    <property type="component" value="Chromosome"/>
</dbReference>
<dbReference type="GO" id="GO:0005829">
    <property type="term" value="C:cytosol"/>
    <property type="evidence" value="ECO:0007669"/>
    <property type="project" value="TreeGrafter"/>
</dbReference>
<dbReference type="GO" id="GO:0060698">
    <property type="term" value="F:endoribonuclease inhibitor activity"/>
    <property type="evidence" value="ECO:0007669"/>
    <property type="project" value="UniProtKB-UniRule"/>
</dbReference>
<dbReference type="GO" id="GO:0019899">
    <property type="term" value="F:enzyme binding"/>
    <property type="evidence" value="ECO:0007669"/>
    <property type="project" value="UniProtKB-UniRule"/>
</dbReference>
<dbReference type="GO" id="GO:1902369">
    <property type="term" value="P:negative regulation of RNA catabolic process"/>
    <property type="evidence" value="ECO:0007669"/>
    <property type="project" value="TreeGrafter"/>
</dbReference>
<dbReference type="CDD" id="cd16841">
    <property type="entry name" value="RraA_family"/>
    <property type="match status" value="1"/>
</dbReference>
<dbReference type="FunFam" id="3.50.30.40:FF:000001">
    <property type="entry name" value="Regulator of ribonuclease activity A"/>
    <property type="match status" value="1"/>
</dbReference>
<dbReference type="Gene3D" id="3.50.30.40">
    <property type="entry name" value="Ribonuclease E inhibitor RraA/RraA-like"/>
    <property type="match status" value="1"/>
</dbReference>
<dbReference type="HAMAP" id="MF_00471">
    <property type="entry name" value="RraA"/>
    <property type="match status" value="1"/>
</dbReference>
<dbReference type="InterPro" id="IPR010203">
    <property type="entry name" value="RraA"/>
</dbReference>
<dbReference type="InterPro" id="IPR005493">
    <property type="entry name" value="RraA/RraA-like"/>
</dbReference>
<dbReference type="InterPro" id="IPR036704">
    <property type="entry name" value="RraA/RraA-like_sf"/>
</dbReference>
<dbReference type="InterPro" id="IPR014339">
    <property type="entry name" value="RraA_gpbac"/>
</dbReference>
<dbReference type="NCBIfam" id="TIGR01935">
    <property type="entry name" value="NOT-MenG"/>
    <property type="match status" value="1"/>
</dbReference>
<dbReference type="NCBIfam" id="NF006875">
    <property type="entry name" value="PRK09372.1"/>
    <property type="match status" value="1"/>
</dbReference>
<dbReference type="NCBIfam" id="TIGR02998">
    <property type="entry name" value="RraA_entero"/>
    <property type="match status" value="1"/>
</dbReference>
<dbReference type="PANTHER" id="PTHR33254">
    <property type="entry name" value="4-HYDROXY-4-METHYL-2-OXOGLUTARATE ALDOLASE 3-RELATED"/>
    <property type="match status" value="1"/>
</dbReference>
<dbReference type="PANTHER" id="PTHR33254:SF29">
    <property type="entry name" value="REGULATOR OF RIBONUCLEASE ACTIVITY A"/>
    <property type="match status" value="1"/>
</dbReference>
<dbReference type="Pfam" id="PF03737">
    <property type="entry name" value="RraA-like"/>
    <property type="match status" value="1"/>
</dbReference>
<dbReference type="SUPFAM" id="SSF89562">
    <property type="entry name" value="RraA-like"/>
    <property type="match status" value="1"/>
</dbReference>
<reference key="1">
    <citation type="journal article" date="2009" name="PLoS Genet.">
        <title>Organised genome dynamics in the Escherichia coli species results in highly diverse adaptive paths.</title>
        <authorList>
            <person name="Touchon M."/>
            <person name="Hoede C."/>
            <person name="Tenaillon O."/>
            <person name="Barbe V."/>
            <person name="Baeriswyl S."/>
            <person name="Bidet P."/>
            <person name="Bingen E."/>
            <person name="Bonacorsi S."/>
            <person name="Bouchier C."/>
            <person name="Bouvet O."/>
            <person name="Calteau A."/>
            <person name="Chiapello H."/>
            <person name="Clermont O."/>
            <person name="Cruveiller S."/>
            <person name="Danchin A."/>
            <person name="Diard M."/>
            <person name="Dossat C."/>
            <person name="Karoui M.E."/>
            <person name="Frapy E."/>
            <person name="Garry L."/>
            <person name="Ghigo J.M."/>
            <person name="Gilles A.M."/>
            <person name="Johnson J."/>
            <person name="Le Bouguenec C."/>
            <person name="Lescat M."/>
            <person name="Mangenot S."/>
            <person name="Martinez-Jehanne V."/>
            <person name="Matic I."/>
            <person name="Nassif X."/>
            <person name="Oztas S."/>
            <person name="Petit M.A."/>
            <person name="Pichon C."/>
            <person name="Rouy Z."/>
            <person name="Ruf C.S."/>
            <person name="Schneider D."/>
            <person name="Tourret J."/>
            <person name="Vacherie B."/>
            <person name="Vallenet D."/>
            <person name="Medigue C."/>
            <person name="Rocha E.P.C."/>
            <person name="Denamur E."/>
        </authorList>
    </citation>
    <scope>NUCLEOTIDE SEQUENCE [LARGE SCALE GENOMIC DNA]</scope>
    <source>
        <strain>ED1a</strain>
    </source>
</reference>
<protein>
    <recommendedName>
        <fullName evidence="1">Regulator of ribonuclease activity A</fullName>
    </recommendedName>
</protein>
<feature type="chain" id="PRO_1000135492" description="Regulator of ribonuclease activity A">
    <location>
        <begin position="1"/>
        <end position="161"/>
    </location>
</feature>